<evidence type="ECO:0000250" key="1"/>
<evidence type="ECO:0000255" key="2"/>
<evidence type="ECO:0000255" key="3">
    <source>
        <dbReference type="PROSITE-ProRule" id="PRU00798"/>
    </source>
</evidence>
<evidence type="ECO:0000255" key="4">
    <source>
        <dbReference type="PROSITE-ProRule" id="PRU10142"/>
    </source>
</evidence>
<evidence type="ECO:0000269" key="5">
    <source>
    </source>
</evidence>
<evidence type="ECO:0000305" key="6"/>
<gene>
    <name type="primary">ost-1</name>
    <name type="synonym">sparc</name>
    <name type="ORF">C44B12.2</name>
</gene>
<reference key="1">
    <citation type="journal article" date="1993" name="Mol. Biol. Cell">
        <title>The Caenorhabditis elegans homologue of the extracellular calcium binding protein SPARC/osteonectin affects nematode body morphology and mobility.</title>
        <authorList>
            <person name="Schwarzbauer J.E."/>
            <person name="Spencer C.S."/>
        </authorList>
    </citation>
    <scope>NUCLEOTIDE SEQUENCE [MRNA]</scope>
    <scope>CHARACTERIZATION</scope>
    <scope>TISSUE SPECIFICITY</scope>
    <source>
        <strain>Bristol N2</strain>
    </source>
</reference>
<reference key="2">
    <citation type="journal article" date="1998" name="Science">
        <title>Genome sequence of the nematode C. elegans: a platform for investigating biology.</title>
        <authorList>
            <consortium name="The C. elegans sequencing consortium"/>
        </authorList>
    </citation>
    <scope>NUCLEOTIDE SEQUENCE [LARGE SCALE GENOMIC DNA]</scope>
    <source>
        <strain>Bristol N2</strain>
    </source>
</reference>
<feature type="signal peptide" evidence="2">
    <location>
        <begin position="1"/>
        <end position="16"/>
    </location>
</feature>
<feature type="chain" id="PRO_0000020311" description="SPARC">
    <location>
        <begin position="17"/>
        <end position="264"/>
    </location>
</feature>
<feature type="domain" description="Follistatin-like">
    <location>
        <begin position="52"/>
        <end position="74"/>
    </location>
</feature>
<feature type="domain" description="Kazal-like" evidence="3">
    <location>
        <begin position="68"/>
        <end position="137"/>
    </location>
</feature>
<feature type="domain" description="EF-hand">
    <location>
        <begin position="224"/>
        <end position="259"/>
    </location>
</feature>
<feature type="binding site" evidence="4">
    <location>
        <position position="237"/>
    </location>
    <ligand>
        <name>Ca(2+)</name>
        <dbReference type="ChEBI" id="CHEBI:29108"/>
    </ligand>
</feature>
<feature type="binding site" evidence="4">
    <location>
        <position position="239"/>
    </location>
    <ligand>
        <name>Ca(2+)</name>
        <dbReference type="ChEBI" id="CHEBI:29108"/>
    </ligand>
</feature>
<feature type="binding site" evidence="4">
    <location>
        <position position="241"/>
    </location>
    <ligand>
        <name>Ca(2+)</name>
        <dbReference type="ChEBI" id="CHEBI:29108"/>
    </ligand>
</feature>
<feature type="binding site" evidence="4">
    <location>
        <position position="243"/>
    </location>
    <ligand>
        <name>Ca(2+)</name>
        <dbReference type="ChEBI" id="CHEBI:29108"/>
    </ligand>
</feature>
<feature type="binding site" evidence="4">
    <location>
        <position position="248"/>
    </location>
    <ligand>
        <name>Ca(2+)</name>
        <dbReference type="ChEBI" id="CHEBI:29108"/>
    </ligand>
</feature>
<feature type="glycosylation site" description="N-linked (GlcNAc...) asparagine" evidence="2">
    <location>
        <position position="96"/>
    </location>
</feature>
<feature type="glycosylation site" description="N-linked (GlcNAc...) asparagine" evidence="2">
    <location>
        <position position="243"/>
    </location>
</feature>
<feature type="disulfide bond" evidence="3">
    <location>
        <begin position="53"/>
        <end position="64"/>
    </location>
</feature>
<feature type="disulfide bond" evidence="3">
    <location>
        <begin position="58"/>
        <end position="74"/>
    </location>
</feature>
<feature type="disulfide bond" evidence="3">
    <location>
        <begin position="76"/>
        <end position="110"/>
    </location>
</feature>
<feature type="disulfide bond" evidence="3">
    <location>
        <begin position="80"/>
        <end position="103"/>
    </location>
</feature>
<feature type="disulfide bond" evidence="3">
    <location>
        <begin position="92"/>
        <end position="135"/>
    </location>
</feature>
<feature type="disulfide bond" evidence="3">
    <location>
        <begin position="141"/>
        <end position="228"/>
    </location>
</feature>
<feature type="disulfide bond" evidence="3">
    <location>
        <begin position="236"/>
        <end position="252"/>
    </location>
</feature>
<accession>P34714</accession>
<name>SPRC_CAEEL</name>
<sequence>MRYALAACLLLLAASSFVDAKKKKIADDELGELLDNIDADEEKKSVEPAKNPCEDHQCGWGKECVVGKKGEPTCECISKCPELDGDPMDKVCANNNQTFTSLCDLYRERCLCKRKSKECSKAFNAKVHLEYLGECKKLDECTEEHMAQFPERMADWLFQVMKELKKRRELHKLEWEELLSEAENDDEKKHVYPVIWKFCELDTKPHDKSVSHHELIPITAPVIPMESCIKPFLEGCDANNDGNISIKEWGKCLGLKEGEIQERC</sequence>
<comment type="function">
    <text>Has a high affinity for collagen. Affects nematode body morphology and mobility. Essential for C.elegans development and muscle function. The cysteine-rich region could have protease inhibitory activity or may provide the framework for a protein binding module. Probable role in skeletal morphogenesis.</text>
</comment>
<comment type="subcellular location">
    <subcellularLocation>
        <location evidence="1">Secreted</location>
        <location evidence="1">Extracellular space</location>
        <location evidence="1">Extracellular matrix</location>
        <location evidence="1">Basement membrane</location>
    </subcellularLocation>
    <text evidence="1">In or around the basement membrane.</text>
</comment>
<comment type="tissue specificity">
    <text evidence="5">Expressed by body wall and sex muscle cells. Probable association with basement membranes.</text>
</comment>
<comment type="developmental stage">
    <text>First expressed in unhatched larvae; continuous throughout subsequent larval stages and in adults.</text>
</comment>
<comment type="similarity">
    <text evidence="6">Belongs to the SPARC family.</text>
</comment>
<proteinExistence type="evidence at protein level"/>
<organism>
    <name type="scientific">Caenorhabditis elegans</name>
    <dbReference type="NCBI Taxonomy" id="6239"/>
    <lineage>
        <taxon>Eukaryota</taxon>
        <taxon>Metazoa</taxon>
        <taxon>Ecdysozoa</taxon>
        <taxon>Nematoda</taxon>
        <taxon>Chromadorea</taxon>
        <taxon>Rhabditida</taxon>
        <taxon>Rhabditina</taxon>
        <taxon>Rhabditomorpha</taxon>
        <taxon>Rhabditoidea</taxon>
        <taxon>Rhabditidae</taxon>
        <taxon>Peloderinae</taxon>
        <taxon>Caenorhabditis</taxon>
    </lineage>
</organism>
<protein>
    <recommendedName>
        <fullName>SPARC</fullName>
    </recommendedName>
    <alternativeName>
        <fullName>Basement-membrane protein 40</fullName>
        <shortName>BM-40</shortName>
    </alternativeName>
    <alternativeName>
        <fullName>Osteonectin</fullName>
        <shortName>ON</shortName>
    </alternativeName>
    <alternativeName>
        <fullName>Secreted protein acidic and rich in cysteine</fullName>
    </alternativeName>
</protein>
<keyword id="KW-0084">Basement membrane</keyword>
<keyword id="KW-0106">Calcium</keyword>
<keyword id="KW-0186">Copper</keyword>
<keyword id="KW-0217">Developmental protein</keyword>
<keyword id="KW-1015">Disulfide bond</keyword>
<keyword id="KW-0272">Extracellular matrix</keyword>
<keyword id="KW-0325">Glycoprotein</keyword>
<keyword id="KW-0479">Metal-binding</keyword>
<keyword id="KW-1185">Reference proteome</keyword>
<keyword id="KW-0964">Secreted</keyword>
<keyword id="KW-0732">Signal</keyword>
<dbReference type="EMBL" id="L21758">
    <property type="protein sequence ID" value="AAA16827.1"/>
    <property type="molecule type" value="Unassigned_DNA"/>
</dbReference>
<dbReference type="EMBL" id="FO080852">
    <property type="protein sequence ID" value="CCD67228.1"/>
    <property type="molecule type" value="Genomic_DNA"/>
</dbReference>
<dbReference type="PIR" id="A47737">
    <property type="entry name" value="A47737"/>
</dbReference>
<dbReference type="RefSeq" id="NP_500039.1">
    <property type="nucleotide sequence ID" value="NM_067638.8"/>
</dbReference>
<dbReference type="SMR" id="P34714"/>
<dbReference type="BioGRID" id="42089">
    <property type="interactions" value="8"/>
</dbReference>
<dbReference type="FunCoup" id="P34714">
    <property type="interactions" value="887"/>
</dbReference>
<dbReference type="STRING" id="6239.C44B12.2a.1"/>
<dbReference type="GlyCosmos" id="P34714">
    <property type="glycosylation" value="2 sites, No reported glycans"/>
</dbReference>
<dbReference type="PaxDb" id="6239-C44B12.2a"/>
<dbReference type="PeptideAtlas" id="P34714"/>
<dbReference type="EnsemblMetazoa" id="C44B12.2a.1">
    <property type="protein sequence ID" value="C44B12.2a.1"/>
    <property type="gene ID" value="WBGene00003893"/>
</dbReference>
<dbReference type="GeneID" id="176931"/>
<dbReference type="KEGG" id="cel:CELE_C44B12.2"/>
<dbReference type="UCSC" id="C44B12.2">
    <property type="organism name" value="c. elegans"/>
</dbReference>
<dbReference type="AGR" id="WB:WBGene00003893"/>
<dbReference type="CTD" id="176931"/>
<dbReference type="WormBase" id="C44B12.2a">
    <property type="protein sequence ID" value="CE08703"/>
    <property type="gene ID" value="WBGene00003893"/>
    <property type="gene designation" value="ost-1"/>
</dbReference>
<dbReference type="eggNOG" id="KOG4004">
    <property type="taxonomic scope" value="Eukaryota"/>
</dbReference>
<dbReference type="HOGENOM" id="CLU_047416_1_0_1"/>
<dbReference type="InParanoid" id="P34714"/>
<dbReference type="OMA" id="CTDELMA"/>
<dbReference type="OrthoDB" id="9972865at2759"/>
<dbReference type="PhylomeDB" id="P34714"/>
<dbReference type="Reactome" id="R-CEL-114608">
    <property type="pathway name" value="Platelet degranulation"/>
</dbReference>
<dbReference type="Reactome" id="R-CEL-3000178">
    <property type="pathway name" value="ECM proteoglycans"/>
</dbReference>
<dbReference type="Reactome" id="R-CEL-381426">
    <property type="pathway name" value="Regulation of Insulin-like Growth Factor (IGF) transport and uptake by Insulin-like Growth Factor Binding Proteins (IGFBPs)"/>
</dbReference>
<dbReference type="Reactome" id="R-CEL-8957275">
    <property type="pathway name" value="Post-translational protein phosphorylation"/>
</dbReference>
<dbReference type="PRO" id="PR:P34714"/>
<dbReference type="Proteomes" id="UP000001940">
    <property type="component" value="Chromosome IV"/>
</dbReference>
<dbReference type="Bgee" id="WBGene00003893">
    <property type="expression patterns" value="Expressed in larva and 3 other cell types or tissues"/>
</dbReference>
<dbReference type="ExpressionAtlas" id="P34714">
    <property type="expression patterns" value="baseline and differential"/>
</dbReference>
<dbReference type="GO" id="GO:0005604">
    <property type="term" value="C:basement membrane"/>
    <property type="evidence" value="ECO:0000314"/>
    <property type="project" value="WormBase"/>
</dbReference>
<dbReference type="GO" id="GO:0005615">
    <property type="term" value="C:extracellular space"/>
    <property type="evidence" value="ECO:0000314"/>
    <property type="project" value="WormBase"/>
</dbReference>
<dbReference type="GO" id="GO:0005509">
    <property type="term" value="F:calcium ion binding"/>
    <property type="evidence" value="ECO:0000314"/>
    <property type="project" value="WormBase"/>
</dbReference>
<dbReference type="GO" id="GO:0005518">
    <property type="term" value="F:collagen binding"/>
    <property type="evidence" value="ECO:0000318"/>
    <property type="project" value="GO_Central"/>
</dbReference>
<dbReference type="GO" id="GO:0050840">
    <property type="term" value="F:extracellular matrix binding"/>
    <property type="evidence" value="ECO:0000318"/>
    <property type="project" value="GO_Central"/>
</dbReference>
<dbReference type="CDD" id="cd16231">
    <property type="entry name" value="EFh_SPARC_like"/>
    <property type="match status" value="1"/>
</dbReference>
<dbReference type="CDD" id="cd01328">
    <property type="entry name" value="FSL_SPARC"/>
    <property type="match status" value="1"/>
</dbReference>
<dbReference type="FunFam" id="1.10.238.10:FF:000234">
    <property type="entry name" value="Protein BM-40"/>
    <property type="match status" value="1"/>
</dbReference>
<dbReference type="FunFam" id="3.30.60.30:FF:000073">
    <property type="entry name" value="Protein CBR-OST-1"/>
    <property type="match status" value="1"/>
</dbReference>
<dbReference type="Gene3D" id="3.30.60.30">
    <property type="match status" value="1"/>
</dbReference>
<dbReference type="Gene3D" id="1.10.238.10">
    <property type="entry name" value="EF-hand"/>
    <property type="match status" value="1"/>
</dbReference>
<dbReference type="InterPro" id="IPR011992">
    <property type="entry name" value="EF-hand-dom_pair"/>
</dbReference>
<dbReference type="InterPro" id="IPR018247">
    <property type="entry name" value="EF_Hand_1_Ca_BS"/>
</dbReference>
<dbReference type="InterPro" id="IPR003645">
    <property type="entry name" value="Fol_N"/>
</dbReference>
<dbReference type="InterPro" id="IPR015369">
    <property type="entry name" value="Follistatin/Osteonectin_EGF"/>
</dbReference>
<dbReference type="InterPro" id="IPR002350">
    <property type="entry name" value="Kazal_dom"/>
</dbReference>
<dbReference type="InterPro" id="IPR036058">
    <property type="entry name" value="Kazal_dom_sf"/>
</dbReference>
<dbReference type="InterPro" id="IPR001999">
    <property type="entry name" value="Osteonectin_CS"/>
</dbReference>
<dbReference type="InterPro" id="IPR019577">
    <property type="entry name" value="SPARC/Testican_Ca-bd-dom"/>
</dbReference>
<dbReference type="InterPro" id="IPR037641">
    <property type="entry name" value="SPARC_FS"/>
</dbReference>
<dbReference type="PANTHER" id="PTHR13866:SF14">
    <property type="entry name" value="BM-40"/>
    <property type="match status" value="1"/>
</dbReference>
<dbReference type="PANTHER" id="PTHR13866">
    <property type="entry name" value="SPARC OSTEONECTIN"/>
    <property type="match status" value="1"/>
</dbReference>
<dbReference type="Pfam" id="PF09289">
    <property type="entry name" value="FOLN"/>
    <property type="match status" value="1"/>
</dbReference>
<dbReference type="Pfam" id="PF07648">
    <property type="entry name" value="Kazal_2"/>
    <property type="match status" value="1"/>
</dbReference>
<dbReference type="Pfam" id="PF10591">
    <property type="entry name" value="SPARC_Ca_bdg"/>
    <property type="match status" value="1"/>
</dbReference>
<dbReference type="SMART" id="SM00274">
    <property type="entry name" value="FOLN"/>
    <property type="match status" value="1"/>
</dbReference>
<dbReference type="SUPFAM" id="SSF47473">
    <property type="entry name" value="EF-hand"/>
    <property type="match status" value="1"/>
</dbReference>
<dbReference type="SUPFAM" id="SSF100895">
    <property type="entry name" value="Kazal-type serine protease inhibitors"/>
    <property type="match status" value="1"/>
</dbReference>
<dbReference type="PROSITE" id="PS00018">
    <property type="entry name" value="EF_HAND_1"/>
    <property type="match status" value="1"/>
</dbReference>
<dbReference type="PROSITE" id="PS51465">
    <property type="entry name" value="KAZAL_2"/>
    <property type="match status" value="1"/>
</dbReference>
<dbReference type="PROSITE" id="PS00612">
    <property type="entry name" value="OSTEONECTIN_1"/>
    <property type="match status" value="1"/>
</dbReference>
<dbReference type="PROSITE" id="PS00613">
    <property type="entry name" value="OSTEONECTIN_2"/>
    <property type="match status" value="1"/>
</dbReference>